<organism>
    <name type="scientific">Bacillus subtilis (strain 168)</name>
    <dbReference type="NCBI Taxonomy" id="224308"/>
    <lineage>
        <taxon>Bacteria</taxon>
        <taxon>Bacillati</taxon>
        <taxon>Bacillota</taxon>
        <taxon>Bacilli</taxon>
        <taxon>Bacillales</taxon>
        <taxon>Bacillaceae</taxon>
        <taxon>Bacillus</taxon>
    </lineage>
</organism>
<protein>
    <recommendedName>
        <fullName>Uncharacterized protein YbaK</fullName>
    </recommendedName>
</protein>
<gene>
    <name type="primary">ybaK</name>
    <name type="synonym">ybxH</name>
    <name type="ordered locus">BSU01520</name>
</gene>
<feature type="chain" id="PRO_0000049453" description="Uncharacterized protein YbaK">
    <location>
        <begin position="1"/>
        <end position="147"/>
    </location>
</feature>
<sequence>MAEVLSFMDVKRQKDFELEKNLLKELSLRQIIQSVKDCLEPLFPFLHDERDIITEGCIDFAIEAYLLGGRFGIFGYYGESMQSISARSAREEEELRMEFFDYLYNWIHEQYATFDKNTVYEAARKFIKDWWTAGFVQREKQCKLRMR</sequence>
<proteinExistence type="predicted"/>
<keyword id="KW-1185">Reference proteome</keyword>
<accession>P50862</accession>
<dbReference type="EMBL" id="X74737">
    <property type="protein sequence ID" value="CAA52755.1"/>
    <property type="molecule type" value="Genomic_DNA"/>
</dbReference>
<dbReference type="EMBL" id="D64126">
    <property type="protein sequence ID" value="BAA10992.1"/>
    <property type="molecule type" value="Genomic_DNA"/>
</dbReference>
<dbReference type="EMBL" id="AL009126">
    <property type="protein sequence ID" value="CAB11928.1"/>
    <property type="molecule type" value="Genomic_DNA"/>
</dbReference>
<dbReference type="PIR" id="H69742">
    <property type="entry name" value="H69742"/>
</dbReference>
<dbReference type="RefSeq" id="NP_388033.1">
    <property type="nucleotide sequence ID" value="NC_000964.3"/>
</dbReference>
<dbReference type="RefSeq" id="WP_003235118.1">
    <property type="nucleotide sequence ID" value="NZ_OZ025638.1"/>
</dbReference>
<dbReference type="SMR" id="P50862"/>
<dbReference type="FunCoup" id="P50862">
    <property type="interactions" value="71"/>
</dbReference>
<dbReference type="STRING" id="224308.BSU01520"/>
<dbReference type="PaxDb" id="224308-BSU01520"/>
<dbReference type="EnsemblBacteria" id="CAB11928">
    <property type="protein sequence ID" value="CAB11928"/>
    <property type="gene ID" value="BSU_01520"/>
</dbReference>
<dbReference type="GeneID" id="938916"/>
<dbReference type="KEGG" id="bsu:BSU01520"/>
<dbReference type="PATRIC" id="fig|224308.179.peg.156"/>
<dbReference type="eggNOG" id="ENOG5032QTK">
    <property type="taxonomic scope" value="Bacteria"/>
</dbReference>
<dbReference type="InParanoid" id="P50862"/>
<dbReference type="OrthoDB" id="2915109at2"/>
<dbReference type="BioCyc" id="BSUB:BSU01520-MONOMER"/>
<dbReference type="Proteomes" id="UP000001570">
    <property type="component" value="Chromosome"/>
</dbReference>
<dbReference type="InterPro" id="IPR019667">
    <property type="entry name" value="Uncharacterised_YbaK"/>
</dbReference>
<dbReference type="Pfam" id="PF10730">
    <property type="entry name" value="DUF2521"/>
    <property type="match status" value="1"/>
</dbReference>
<name>YBAK_BACSU</name>
<reference key="1">
    <citation type="journal article" date="1995" name="J. Bacteriol.">
        <title>Nucleotide sequence and regulation of a new putative cell wall hydrolase gene, cwlD, which affects germination in Bacillus subtilis.</title>
        <authorList>
            <person name="Sekiguchi J."/>
            <person name="Akeo K."/>
            <person name="Yamamoto H."/>
            <person name="Khasanov F.K."/>
            <person name="Alonso J.C."/>
            <person name="Kuroda A."/>
        </authorList>
    </citation>
    <scope>NUCLEOTIDE SEQUENCE [GENOMIC DNA]</scope>
</reference>
<reference key="2">
    <citation type="journal article" date="1996" name="Microbiology">
        <title>Sequence analysis of a 50 kb region between spo0H and rrnH on the Bacillus subtilis chromosome.</title>
        <authorList>
            <person name="Yasumoto K."/>
            <person name="Liu H."/>
            <person name="Jeong S.M."/>
            <person name="Ohashi Y."/>
            <person name="Kakinuma S."/>
            <person name="Tanaka K."/>
            <person name="Kawamura F."/>
            <person name="Yoshikawa H."/>
            <person name="Takahashi H."/>
        </authorList>
    </citation>
    <scope>NUCLEOTIDE SEQUENCE [GENOMIC DNA]</scope>
    <source>
        <strain>168</strain>
    </source>
</reference>
<reference key="3">
    <citation type="journal article" date="1997" name="Nature">
        <title>The complete genome sequence of the Gram-positive bacterium Bacillus subtilis.</title>
        <authorList>
            <person name="Kunst F."/>
            <person name="Ogasawara N."/>
            <person name="Moszer I."/>
            <person name="Albertini A.M."/>
            <person name="Alloni G."/>
            <person name="Azevedo V."/>
            <person name="Bertero M.G."/>
            <person name="Bessieres P."/>
            <person name="Bolotin A."/>
            <person name="Borchert S."/>
            <person name="Borriss R."/>
            <person name="Boursier L."/>
            <person name="Brans A."/>
            <person name="Braun M."/>
            <person name="Brignell S.C."/>
            <person name="Bron S."/>
            <person name="Brouillet S."/>
            <person name="Bruschi C.V."/>
            <person name="Caldwell B."/>
            <person name="Capuano V."/>
            <person name="Carter N.M."/>
            <person name="Choi S.-K."/>
            <person name="Codani J.-J."/>
            <person name="Connerton I.F."/>
            <person name="Cummings N.J."/>
            <person name="Daniel R.A."/>
            <person name="Denizot F."/>
            <person name="Devine K.M."/>
            <person name="Duesterhoeft A."/>
            <person name="Ehrlich S.D."/>
            <person name="Emmerson P.T."/>
            <person name="Entian K.-D."/>
            <person name="Errington J."/>
            <person name="Fabret C."/>
            <person name="Ferrari E."/>
            <person name="Foulger D."/>
            <person name="Fritz C."/>
            <person name="Fujita M."/>
            <person name="Fujita Y."/>
            <person name="Fuma S."/>
            <person name="Galizzi A."/>
            <person name="Galleron N."/>
            <person name="Ghim S.-Y."/>
            <person name="Glaser P."/>
            <person name="Goffeau A."/>
            <person name="Golightly E.J."/>
            <person name="Grandi G."/>
            <person name="Guiseppi G."/>
            <person name="Guy B.J."/>
            <person name="Haga K."/>
            <person name="Haiech J."/>
            <person name="Harwood C.R."/>
            <person name="Henaut A."/>
            <person name="Hilbert H."/>
            <person name="Holsappel S."/>
            <person name="Hosono S."/>
            <person name="Hullo M.-F."/>
            <person name="Itaya M."/>
            <person name="Jones L.-M."/>
            <person name="Joris B."/>
            <person name="Karamata D."/>
            <person name="Kasahara Y."/>
            <person name="Klaerr-Blanchard M."/>
            <person name="Klein C."/>
            <person name="Kobayashi Y."/>
            <person name="Koetter P."/>
            <person name="Koningstein G."/>
            <person name="Krogh S."/>
            <person name="Kumano M."/>
            <person name="Kurita K."/>
            <person name="Lapidus A."/>
            <person name="Lardinois S."/>
            <person name="Lauber J."/>
            <person name="Lazarevic V."/>
            <person name="Lee S.-M."/>
            <person name="Levine A."/>
            <person name="Liu H."/>
            <person name="Masuda S."/>
            <person name="Mauel C."/>
            <person name="Medigue C."/>
            <person name="Medina N."/>
            <person name="Mellado R.P."/>
            <person name="Mizuno M."/>
            <person name="Moestl D."/>
            <person name="Nakai S."/>
            <person name="Noback M."/>
            <person name="Noone D."/>
            <person name="O'Reilly M."/>
            <person name="Ogawa K."/>
            <person name="Ogiwara A."/>
            <person name="Oudega B."/>
            <person name="Park S.-H."/>
            <person name="Parro V."/>
            <person name="Pohl T.M."/>
            <person name="Portetelle D."/>
            <person name="Porwollik S."/>
            <person name="Prescott A.M."/>
            <person name="Presecan E."/>
            <person name="Pujic P."/>
            <person name="Purnelle B."/>
            <person name="Rapoport G."/>
            <person name="Rey M."/>
            <person name="Reynolds S."/>
            <person name="Rieger M."/>
            <person name="Rivolta C."/>
            <person name="Rocha E."/>
            <person name="Roche B."/>
            <person name="Rose M."/>
            <person name="Sadaie Y."/>
            <person name="Sato T."/>
            <person name="Scanlan E."/>
            <person name="Schleich S."/>
            <person name="Schroeter R."/>
            <person name="Scoffone F."/>
            <person name="Sekiguchi J."/>
            <person name="Sekowska A."/>
            <person name="Seror S.J."/>
            <person name="Serror P."/>
            <person name="Shin B.-S."/>
            <person name="Soldo B."/>
            <person name="Sorokin A."/>
            <person name="Tacconi E."/>
            <person name="Takagi T."/>
            <person name="Takahashi H."/>
            <person name="Takemaru K."/>
            <person name="Takeuchi M."/>
            <person name="Tamakoshi A."/>
            <person name="Tanaka T."/>
            <person name="Terpstra P."/>
            <person name="Tognoni A."/>
            <person name="Tosato V."/>
            <person name="Uchiyama S."/>
            <person name="Vandenbol M."/>
            <person name="Vannier F."/>
            <person name="Vassarotti A."/>
            <person name="Viari A."/>
            <person name="Wambutt R."/>
            <person name="Wedler E."/>
            <person name="Wedler H."/>
            <person name="Weitzenegger T."/>
            <person name="Winters P."/>
            <person name="Wipat A."/>
            <person name="Yamamoto H."/>
            <person name="Yamane K."/>
            <person name="Yasumoto K."/>
            <person name="Yata K."/>
            <person name="Yoshida K."/>
            <person name="Yoshikawa H.-F."/>
            <person name="Zumstein E."/>
            <person name="Yoshikawa H."/>
            <person name="Danchin A."/>
        </authorList>
    </citation>
    <scope>NUCLEOTIDE SEQUENCE [LARGE SCALE GENOMIC DNA]</scope>
    <source>
        <strain>168</strain>
    </source>
</reference>